<dbReference type="EMBL" id="U52521">
    <property type="protein sequence ID" value="AAA97923.1"/>
    <property type="molecule type" value="mRNA"/>
</dbReference>
<dbReference type="EMBL" id="AF124489">
    <property type="protein sequence ID" value="AAD29390.1"/>
    <property type="molecule type" value="mRNA"/>
</dbReference>
<dbReference type="EMBL" id="AK290472">
    <property type="protein sequence ID" value="BAF83161.1"/>
    <property type="molecule type" value="mRNA"/>
</dbReference>
<dbReference type="EMBL" id="AK299600">
    <property type="protein sequence ID" value="BAG61531.1"/>
    <property type="molecule type" value="mRNA"/>
</dbReference>
<dbReference type="EMBL" id="AC099339">
    <property type="status" value="NOT_ANNOTATED_CDS"/>
    <property type="molecule type" value="Genomic_DNA"/>
</dbReference>
<dbReference type="EMBL" id="AC106882">
    <property type="status" value="NOT_ANNOTATED_CDS"/>
    <property type="molecule type" value="Genomic_DNA"/>
</dbReference>
<dbReference type="EMBL" id="AC113155">
    <property type="status" value="NOT_ANNOTATED_CDS"/>
    <property type="molecule type" value="Genomic_DNA"/>
</dbReference>
<dbReference type="EMBL" id="CH471056">
    <property type="protein sequence ID" value="EAX04968.1"/>
    <property type="molecule type" value="Genomic_DNA"/>
</dbReference>
<dbReference type="EMBL" id="CH471056">
    <property type="protein sequence ID" value="EAX04969.1"/>
    <property type="molecule type" value="Genomic_DNA"/>
</dbReference>
<dbReference type="EMBL" id="BC103759">
    <property type="protein sequence ID" value="AAI03760.1"/>
    <property type="molecule type" value="mRNA"/>
</dbReference>
<dbReference type="EMBL" id="BC105114">
    <property type="protein sequence ID" value="AAI05115.1"/>
    <property type="molecule type" value="mRNA"/>
</dbReference>
<dbReference type="EMBL" id="BC105116">
    <property type="protein sequence ID" value="AAI05117.1"/>
    <property type="molecule type" value="mRNA"/>
</dbReference>
<dbReference type="EMBL" id="BC143675">
    <property type="protein sequence ID" value="AAI43676.1"/>
    <property type="molecule type" value="mRNA"/>
</dbReference>
<dbReference type="CCDS" id="CCDS34080.1">
    <molecule id="P53367-1"/>
</dbReference>
<dbReference type="CCDS" id="CCDS3780.1">
    <molecule id="P53367-2"/>
</dbReference>
<dbReference type="PIR" id="G02515">
    <property type="entry name" value="G02515"/>
</dbReference>
<dbReference type="RefSeq" id="NP_001020764.1">
    <molecule id="P53367-2"/>
    <property type="nucleotide sequence ID" value="NM_001025593.3"/>
</dbReference>
<dbReference type="RefSeq" id="NP_001020766.1">
    <molecule id="P53367-1"/>
    <property type="nucleotide sequence ID" value="NM_001025595.3"/>
</dbReference>
<dbReference type="RefSeq" id="NP_001274360.1">
    <molecule id="P53367-1"/>
    <property type="nucleotide sequence ID" value="NM_001287431.2"/>
</dbReference>
<dbReference type="RefSeq" id="NP_001274361.1">
    <molecule id="P53367-1"/>
    <property type="nucleotide sequence ID" value="NM_001287432.2"/>
</dbReference>
<dbReference type="RefSeq" id="NP_001274362.1">
    <molecule id="P53367-2"/>
    <property type="nucleotide sequence ID" value="NM_001287433.2"/>
</dbReference>
<dbReference type="RefSeq" id="NP_055262.1">
    <molecule id="P53367-2"/>
    <property type="nucleotide sequence ID" value="NM_014447.4"/>
</dbReference>
<dbReference type="RefSeq" id="XP_011530171.1">
    <property type="nucleotide sequence ID" value="XM_011531869.2"/>
</dbReference>
<dbReference type="RefSeq" id="XP_011530172.1">
    <property type="nucleotide sequence ID" value="XM_011531870.2"/>
</dbReference>
<dbReference type="SMR" id="P53367"/>
<dbReference type="BioGRID" id="118084">
    <property type="interactions" value="149"/>
</dbReference>
<dbReference type="FunCoup" id="P53367">
    <property type="interactions" value="2776"/>
</dbReference>
<dbReference type="IntAct" id="P53367">
    <property type="interactions" value="45"/>
</dbReference>
<dbReference type="MINT" id="P53367"/>
<dbReference type="STRING" id="9606.ENSP00000296557"/>
<dbReference type="GlyGen" id="P53367">
    <property type="glycosylation" value="1 site, 1 O-linked glycan (1 site)"/>
</dbReference>
<dbReference type="iPTMnet" id="P53367"/>
<dbReference type="MetOSite" id="P53367"/>
<dbReference type="PhosphoSitePlus" id="P53367"/>
<dbReference type="BioMuta" id="ARFIP1"/>
<dbReference type="DMDM" id="21264399"/>
<dbReference type="jPOST" id="P53367"/>
<dbReference type="MassIVE" id="P53367"/>
<dbReference type="PaxDb" id="9606-ENSP00000395083"/>
<dbReference type="PeptideAtlas" id="P53367"/>
<dbReference type="ProteomicsDB" id="5003"/>
<dbReference type="ProteomicsDB" id="56575">
    <molecule id="P53367-1"/>
</dbReference>
<dbReference type="ProteomicsDB" id="56576">
    <molecule id="P53367-2"/>
</dbReference>
<dbReference type="Pumba" id="P53367"/>
<dbReference type="Antibodypedia" id="3910">
    <property type="antibodies" value="251 antibodies from 31 providers"/>
</dbReference>
<dbReference type="DNASU" id="27236"/>
<dbReference type="Ensembl" id="ENST00000353617.7">
    <molecule id="P53367-1"/>
    <property type="protein sequence ID" value="ENSP00000296557.4"/>
    <property type="gene ID" value="ENSG00000164144.16"/>
</dbReference>
<dbReference type="Ensembl" id="ENST00000356064.3">
    <molecule id="P53367-2"/>
    <property type="protein sequence ID" value="ENSP00000348360.3"/>
    <property type="gene ID" value="ENSG00000164144.16"/>
</dbReference>
<dbReference type="Ensembl" id="ENST00000405727.6">
    <molecule id="P53367-2"/>
    <property type="protein sequence ID" value="ENSP00000384189.2"/>
    <property type="gene ID" value="ENSG00000164144.16"/>
</dbReference>
<dbReference type="Ensembl" id="ENST00000429148.6">
    <molecule id="P53367-3"/>
    <property type="protein sequence ID" value="ENSP00000396653.2"/>
    <property type="gene ID" value="ENSG00000164144.16"/>
</dbReference>
<dbReference type="Ensembl" id="ENST00000451320.6">
    <molecule id="P53367-1"/>
    <property type="protein sequence ID" value="ENSP00000395083.2"/>
    <property type="gene ID" value="ENSG00000164144.16"/>
</dbReference>
<dbReference type="GeneID" id="27236"/>
<dbReference type="KEGG" id="hsa:27236"/>
<dbReference type="MANE-Select" id="ENST00000353617.7">
    <property type="protein sequence ID" value="ENSP00000296557.4"/>
    <property type="RefSeq nucleotide sequence ID" value="NM_001025595.3"/>
    <property type="RefSeq protein sequence ID" value="NP_001020766.1"/>
</dbReference>
<dbReference type="UCSC" id="uc003imz.5">
    <molecule id="P53367-1"/>
    <property type="organism name" value="human"/>
</dbReference>
<dbReference type="UCSC" id="uc011cij.4">
    <property type="organism name" value="human"/>
</dbReference>
<dbReference type="AGR" id="HGNC:21496"/>
<dbReference type="CTD" id="27236"/>
<dbReference type="DisGeNET" id="27236"/>
<dbReference type="GeneCards" id="ARFIP1"/>
<dbReference type="HGNC" id="HGNC:21496">
    <property type="gene designation" value="ARFIP1"/>
</dbReference>
<dbReference type="HPA" id="ENSG00000164144">
    <property type="expression patterns" value="Low tissue specificity"/>
</dbReference>
<dbReference type="MIM" id="605928">
    <property type="type" value="gene"/>
</dbReference>
<dbReference type="neXtProt" id="NX_P53367"/>
<dbReference type="OpenTargets" id="ENSG00000164144"/>
<dbReference type="PharmGKB" id="PA134920621"/>
<dbReference type="VEuPathDB" id="HostDB:ENSG00000164144"/>
<dbReference type="eggNOG" id="KOG3876">
    <property type="taxonomic scope" value="Eukaryota"/>
</dbReference>
<dbReference type="GeneTree" id="ENSGT00950000183040"/>
<dbReference type="HOGENOM" id="CLU_047975_2_0_1"/>
<dbReference type="InParanoid" id="P53367"/>
<dbReference type="OMA" id="HRRHYER"/>
<dbReference type="OrthoDB" id="9994780at2759"/>
<dbReference type="PAN-GO" id="P53367">
    <property type="GO annotations" value="4 GO annotations based on evolutionary models"/>
</dbReference>
<dbReference type="PhylomeDB" id="P53367"/>
<dbReference type="TreeFam" id="TF314945"/>
<dbReference type="PathwayCommons" id="P53367"/>
<dbReference type="SignaLink" id="P53367"/>
<dbReference type="SIGNOR" id="P53367"/>
<dbReference type="BioGRID-ORCS" id="27236">
    <property type="hits" value="15 hits in 1145 CRISPR screens"/>
</dbReference>
<dbReference type="ChiTaRS" id="ARFIP1">
    <property type="organism name" value="human"/>
</dbReference>
<dbReference type="GeneWiki" id="ARFIP1"/>
<dbReference type="GenomeRNAi" id="27236"/>
<dbReference type="Pharos" id="P53367">
    <property type="development level" value="Tbio"/>
</dbReference>
<dbReference type="PRO" id="PR:P53367"/>
<dbReference type="Proteomes" id="UP000005640">
    <property type="component" value="Chromosome 4"/>
</dbReference>
<dbReference type="RNAct" id="P53367">
    <property type="molecule type" value="protein"/>
</dbReference>
<dbReference type="Bgee" id="ENSG00000164144">
    <property type="expression patterns" value="Expressed in secondary oocyte and 199 other cell types or tissues"/>
</dbReference>
<dbReference type="ExpressionAtlas" id="P53367">
    <property type="expression patterns" value="baseline and differential"/>
</dbReference>
<dbReference type="GO" id="GO:0005829">
    <property type="term" value="C:cytosol"/>
    <property type="evidence" value="ECO:0000314"/>
    <property type="project" value="MGI"/>
</dbReference>
<dbReference type="GO" id="GO:0000139">
    <property type="term" value="C:Golgi membrane"/>
    <property type="evidence" value="ECO:0000314"/>
    <property type="project" value="UniProtKB"/>
</dbReference>
<dbReference type="GO" id="GO:0032588">
    <property type="term" value="C:trans-Golgi network membrane"/>
    <property type="evidence" value="ECO:0000314"/>
    <property type="project" value="FlyBase"/>
</dbReference>
<dbReference type="GO" id="GO:0070273">
    <property type="term" value="F:phosphatidylinositol-4-phosphate binding"/>
    <property type="evidence" value="ECO:0000314"/>
    <property type="project" value="FlyBase"/>
</dbReference>
<dbReference type="GO" id="GO:0005543">
    <property type="term" value="F:phospholipid binding"/>
    <property type="evidence" value="ECO:0000318"/>
    <property type="project" value="GO_Central"/>
</dbReference>
<dbReference type="GO" id="GO:0019904">
    <property type="term" value="F:protein domain specific binding"/>
    <property type="evidence" value="ECO:0007669"/>
    <property type="project" value="InterPro"/>
</dbReference>
<dbReference type="GO" id="GO:0006886">
    <property type="term" value="P:intracellular protein transport"/>
    <property type="evidence" value="ECO:0000314"/>
    <property type="project" value="MGI"/>
</dbReference>
<dbReference type="GO" id="GO:1905280">
    <property type="term" value="P:negative regulation of retrograde transport, endosome to Golgi"/>
    <property type="evidence" value="ECO:0000315"/>
    <property type="project" value="CACAO"/>
</dbReference>
<dbReference type="GO" id="GO:0034315">
    <property type="term" value="P:regulation of Arp2/3 complex-mediated actin nucleation"/>
    <property type="evidence" value="ECO:0000318"/>
    <property type="project" value="GO_Central"/>
</dbReference>
<dbReference type="GO" id="GO:0050708">
    <property type="term" value="P:regulation of protein secretion"/>
    <property type="evidence" value="ECO:0000314"/>
    <property type="project" value="MGI"/>
</dbReference>
<dbReference type="CDD" id="cd07660">
    <property type="entry name" value="BAR_Arfaptin"/>
    <property type="match status" value="1"/>
</dbReference>
<dbReference type="FunFam" id="1.20.1270.60:FF:000003">
    <property type="entry name" value="arfaptin-2 isoform X1"/>
    <property type="match status" value="1"/>
</dbReference>
<dbReference type="Gene3D" id="1.20.1270.60">
    <property type="entry name" value="Arfaptin homology (AH) domain/BAR domain"/>
    <property type="match status" value="1"/>
</dbReference>
<dbReference type="InterPro" id="IPR027267">
    <property type="entry name" value="AH/BAR_dom_sf"/>
</dbReference>
<dbReference type="InterPro" id="IPR010504">
    <property type="entry name" value="AH_dom"/>
</dbReference>
<dbReference type="InterPro" id="IPR030798">
    <property type="entry name" value="Arfaptin_fam"/>
</dbReference>
<dbReference type="PANTHER" id="PTHR12141:SF4">
    <property type="entry name" value="ARFAPTIN-1"/>
    <property type="match status" value="1"/>
</dbReference>
<dbReference type="PANTHER" id="PTHR12141">
    <property type="entry name" value="ARFAPTIN-RELATED"/>
    <property type="match status" value="1"/>
</dbReference>
<dbReference type="Pfam" id="PF06456">
    <property type="entry name" value="Arfaptin"/>
    <property type="match status" value="1"/>
</dbReference>
<dbReference type="SMART" id="SM01015">
    <property type="entry name" value="Arfaptin"/>
    <property type="match status" value="1"/>
</dbReference>
<dbReference type="SUPFAM" id="SSF103657">
    <property type="entry name" value="BAR/IMD domain-like"/>
    <property type="match status" value="1"/>
</dbReference>
<dbReference type="PROSITE" id="PS50870">
    <property type="entry name" value="AH"/>
    <property type="match status" value="1"/>
</dbReference>
<comment type="function">
    <text evidence="5 7">Plays a role in controlling biogenesis of secretory granules at the trans-Golgi network (PubMed:22981988). Mechanistically, binds ARF-GTP at the neck of a growing secretory granule precursor and forms a protective scaffold (PubMed:22981988, PubMed:9038142). Once the granule precursor has been completely loaded, active PRKD1 phosphorylates ARFIP1 and releases it from ARFs (PubMed:22981988). In turn, ARFs induce fission (PubMed:22981988). Through this mechanism, ensures proper secretory granule formation at the Golgi of pancreatic beta cells (PubMed:22981988).</text>
</comment>
<comment type="subunit">
    <text evidence="3 4 5 6">Forms homodimers or heterodimers with ARFIP2 (PubMed:21239483). Interacts with non-myristoylated GTP-bound ARF3, but not to GDP-bound ARF3 (PubMed:10413101). Interacts with ARF1 (PubMed:10413101, PubMed:22981988). Binds with lower affinity to ARF5 and with very little affinity to ARF6 (PubMed:10413101). Interacts with ARL1 (PubMed:21239483, PubMed:22981988). Interacts with ATG9A (PubMed:30917996).</text>
</comment>
<comment type="interaction">
    <interactant intactId="EBI-2808808">
        <id>P53367</id>
    </interactant>
    <interactant intactId="EBI-24213872">
        <id>P51825-3</id>
        <label>AFF1</label>
    </interactant>
    <organismsDiffer>false</organismsDiffer>
    <experiments>3</experiments>
</comment>
<comment type="interaction">
    <interactant intactId="EBI-2808808">
        <id>P53367</id>
    </interactant>
    <interactant intactId="EBI-447171">
        <id>P84077</id>
        <label>ARF1</label>
    </interactant>
    <organismsDiffer>false</organismsDiffer>
    <experiments>2</experiments>
</comment>
<comment type="interaction">
    <interactant intactId="EBI-2808808">
        <id>P53367</id>
    </interactant>
    <interactant intactId="EBI-638194">
        <id>P53365</id>
        <label>ARFIP2</label>
    </interactant>
    <organismsDiffer>false</organismsDiffer>
    <experiments>7</experiments>
</comment>
<comment type="interaction">
    <interactant intactId="EBI-2808808">
        <id>P53367</id>
    </interactant>
    <interactant intactId="EBI-1052746">
        <id>P40616</id>
        <label>ARL1</label>
    </interactant>
    <organismsDiffer>false</organismsDiffer>
    <experiments>3</experiments>
</comment>
<comment type="interaction">
    <interactant intactId="EBI-2808808">
        <id>P53367</id>
    </interactant>
    <interactant intactId="EBI-7996695">
        <id>Q8WZ55</id>
        <label>BSND</label>
    </interactant>
    <organismsDiffer>false</organismsDiffer>
    <experiments>5</experiments>
</comment>
<comment type="interaction">
    <interactant intactId="EBI-2808808">
        <id>P53367</id>
    </interactant>
    <interactant intactId="EBI-11522780">
        <id>Q96DZ9-2</id>
        <label>CMTM5</label>
    </interactant>
    <organismsDiffer>false</organismsDiffer>
    <experiments>3</experiments>
</comment>
<comment type="interaction">
    <interactant intactId="EBI-2808808">
        <id>P53367</id>
    </interactant>
    <interactant intactId="EBI-12878374">
        <id>Q9BSY9</id>
        <label>DESI2</label>
    </interactant>
    <organismsDiffer>false</organismsDiffer>
    <experiments>3</experiments>
</comment>
<comment type="interaction">
    <interactant intactId="EBI-2808808">
        <id>P53367</id>
    </interactant>
    <interactant intactId="EBI-3044087">
        <id>Q7Z3Y8</id>
        <label>KRT27</label>
    </interactant>
    <organismsDiffer>false</organismsDiffer>
    <experiments>3</experiments>
</comment>
<comment type="interaction">
    <interactant intactId="EBI-2808808">
        <id>P53367</id>
    </interactant>
    <interactant intactId="EBI-1049638">
        <id>Q14525</id>
        <label>KRT33B</label>
    </interactant>
    <organismsDiffer>false</organismsDiffer>
    <experiments>3</experiments>
</comment>
<comment type="interaction">
    <interactant intactId="EBI-2808808">
        <id>P53367</id>
    </interactant>
    <interactant intactId="EBI-1045155">
        <id>P43360</id>
        <label>MAGEA6</label>
    </interactant>
    <organismsDiffer>false</organismsDiffer>
    <experiments>3</experiments>
</comment>
<comment type="interaction">
    <interactant intactId="EBI-2808808">
        <id>P53367</id>
    </interactant>
    <interactant intactId="EBI-1181072">
        <id>Q15139</id>
        <label>PRKD1</label>
    </interactant>
    <organismsDiffer>false</organismsDiffer>
    <experiments>2</experiments>
</comment>
<comment type="interaction">
    <interactant intactId="EBI-2808808">
        <id>P53367</id>
    </interactant>
    <interactant intactId="EBI-1052363">
        <id>Q9NS64</id>
        <label>RPRM</label>
    </interactant>
    <organismsDiffer>false</organismsDiffer>
    <experiments>3</experiments>
</comment>
<comment type="interaction">
    <interactant intactId="EBI-2808808">
        <id>P53367</id>
    </interactant>
    <interactant intactId="EBI-954338">
        <id>O15126</id>
        <label>SCAMP1</label>
    </interactant>
    <organismsDiffer>false</organismsDiffer>
    <experiments>3</experiments>
</comment>
<comment type="interaction">
    <interactant intactId="EBI-2808808">
        <id>P53367</id>
    </interactant>
    <interactant intactId="EBI-2854842">
        <id>Q8WV19</id>
        <label>SFT2D1</label>
    </interactant>
    <organismsDiffer>false</organismsDiffer>
    <experiments>3</experiments>
</comment>
<comment type="interaction">
    <interactant intactId="EBI-2808808">
        <id>P53367</id>
    </interactant>
    <interactant intactId="EBI-12334905">
        <id>Q71RC9</id>
        <label>SMIM5</label>
    </interactant>
    <organismsDiffer>false</organismsDiffer>
    <experiments>3</experiments>
</comment>
<comment type="interaction">
    <interactant intactId="EBI-2808808">
        <id>P53367</id>
    </interactant>
    <interactant intactId="EBI-12828299">
        <id>O60906</id>
        <label>SMPD2</label>
    </interactant>
    <organismsDiffer>false</organismsDiffer>
    <experiments>3</experiments>
</comment>
<comment type="interaction">
    <interactant intactId="EBI-2808808">
        <id>P53367</id>
    </interactant>
    <interactant intactId="EBI-11321949">
        <id>O43761</id>
        <label>SYNGR3</label>
    </interactant>
    <organismsDiffer>false</organismsDiffer>
    <experiments>3</experiments>
</comment>
<comment type="interaction">
    <interactant intactId="EBI-2808808">
        <id>P53367</id>
    </interactant>
    <interactant intactId="EBI-1044859">
        <id>Q9UBN6</id>
        <label>TNFRSF10D</label>
    </interactant>
    <organismsDiffer>false</organismsDiffer>
    <experiments>3</experiments>
</comment>
<comment type="subcellular location">
    <subcellularLocation>
        <location evidence="5 7">Golgi apparatus</location>
    </subcellularLocation>
    <subcellularLocation>
        <location evidence="4 6">Golgi apparatus</location>
        <location evidence="4 6">trans-Golgi network membrane</location>
    </subcellularLocation>
</comment>
<comment type="alternative products">
    <event type="alternative splicing"/>
    <isoform>
        <id>P53367-1</id>
        <name>B</name>
        <name>1b</name>
        <sequence type="displayed"/>
    </isoform>
    <isoform>
        <id>P53367-2</id>
        <name>A</name>
        <name>1a</name>
        <sequence type="described" ref="VSP_004088"/>
    </isoform>
    <isoform>
        <id>P53367-3</id>
        <name>3</name>
        <sequence type="described" ref="VSP_057425"/>
    </isoform>
</comment>
<comment type="tissue specificity">
    <text evidence="7">Ubiquitously expressed (PubMed:9038142). Higher levels in liver, pancreas, placenta, skeletal muscle and heart (PubMed:9038142).</text>
</comment>
<comment type="PTM">
    <text evidence="5">Phosphorylated by PRKD1; phosphorylation delocalizes ARFIP1 from the Golgi and disrupts its ability to inhibit the activity of ADP-ribosylation factor, an important component of the vesicle scission machinery.</text>
</comment>
<keyword id="KW-0007">Acetylation</keyword>
<keyword id="KW-0025">Alternative splicing</keyword>
<keyword id="KW-0333">Golgi apparatus</keyword>
<keyword id="KW-0472">Membrane</keyword>
<keyword id="KW-0597">Phosphoprotein</keyword>
<keyword id="KW-1267">Proteomics identification</keyword>
<keyword id="KW-1185">Reference proteome</keyword>
<name>ARFP1_HUMAN</name>
<protein>
    <recommendedName>
        <fullName evidence="11">Arfaptin-1</fullName>
    </recommendedName>
    <alternativeName>
        <fullName evidence="11">ADP-ribosylation factor-interacting protein 1</fullName>
    </alternativeName>
</protein>
<accession>P53367</accession>
<accession>B4DS69</accession>
<accession>Q2M2X4</accession>
<accession>Q3SYL4</accession>
<accession>Q9Y2X6</accession>
<gene>
    <name evidence="10 12" type="primary">ARFIP1</name>
</gene>
<organism>
    <name type="scientific">Homo sapiens</name>
    <name type="common">Human</name>
    <dbReference type="NCBI Taxonomy" id="9606"/>
    <lineage>
        <taxon>Eukaryota</taxon>
        <taxon>Metazoa</taxon>
        <taxon>Chordata</taxon>
        <taxon>Craniata</taxon>
        <taxon>Vertebrata</taxon>
        <taxon>Euteleostomi</taxon>
        <taxon>Mammalia</taxon>
        <taxon>Eutheria</taxon>
        <taxon>Euarchontoglires</taxon>
        <taxon>Primates</taxon>
        <taxon>Haplorrhini</taxon>
        <taxon>Catarrhini</taxon>
        <taxon>Hominidae</taxon>
        <taxon>Homo</taxon>
    </lineage>
</organism>
<reference key="1">
    <citation type="journal article" date="1997" name="J. Biol. Chem.">
        <title>Arfaptin 1, a putative cytosolic target protein of ADP-ribosylation factor, is recruited to Golgi membranes.</title>
        <authorList>
            <person name="Kanoh H."/>
            <person name="Williger B.-T."/>
            <person name="Exton J.H."/>
        </authorList>
    </citation>
    <scope>NUCLEOTIDE SEQUENCE [MRNA] (ISOFORM A)</scope>
    <scope>FUNCTION</scope>
    <scope>SUBCELLULAR LOCATION</scope>
    <scope>TISSUE SPECIFICITY</scope>
</reference>
<reference key="2">
    <citation type="submission" date="1999-01" db="EMBL/GenBank/DDBJ databases">
        <title>Arfaptin-1b, a long splice variant of arfaptin-1.</title>
        <authorList>
            <person name="Premont R.T."/>
            <person name="Lefkowitz R.J."/>
        </authorList>
    </citation>
    <scope>NUCLEOTIDE SEQUENCE [MRNA] (ISOFORM B)</scope>
    <source>
        <tissue>Liver</tissue>
    </source>
</reference>
<reference key="3">
    <citation type="journal article" date="2004" name="Nat. Genet.">
        <title>Complete sequencing and characterization of 21,243 full-length human cDNAs.</title>
        <authorList>
            <person name="Ota T."/>
            <person name="Suzuki Y."/>
            <person name="Nishikawa T."/>
            <person name="Otsuki T."/>
            <person name="Sugiyama T."/>
            <person name="Irie R."/>
            <person name="Wakamatsu A."/>
            <person name="Hayashi K."/>
            <person name="Sato H."/>
            <person name="Nagai K."/>
            <person name="Kimura K."/>
            <person name="Makita H."/>
            <person name="Sekine M."/>
            <person name="Obayashi M."/>
            <person name="Nishi T."/>
            <person name="Shibahara T."/>
            <person name="Tanaka T."/>
            <person name="Ishii S."/>
            <person name="Yamamoto J."/>
            <person name="Saito K."/>
            <person name="Kawai Y."/>
            <person name="Isono Y."/>
            <person name="Nakamura Y."/>
            <person name="Nagahari K."/>
            <person name="Murakami K."/>
            <person name="Yasuda T."/>
            <person name="Iwayanagi T."/>
            <person name="Wagatsuma M."/>
            <person name="Shiratori A."/>
            <person name="Sudo H."/>
            <person name="Hosoiri T."/>
            <person name="Kaku Y."/>
            <person name="Kodaira H."/>
            <person name="Kondo H."/>
            <person name="Sugawara M."/>
            <person name="Takahashi M."/>
            <person name="Kanda K."/>
            <person name="Yokoi T."/>
            <person name="Furuya T."/>
            <person name="Kikkawa E."/>
            <person name="Omura Y."/>
            <person name="Abe K."/>
            <person name="Kamihara K."/>
            <person name="Katsuta N."/>
            <person name="Sato K."/>
            <person name="Tanikawa M."/>
            <person name="Yamazaki M."/>
            <person name="Ninomiya K."/>
            <person name="Ishibashi T."/>
            <person name="Yamashita H."/>
            <person name="Murakawa K."/>
            <person name="Fujimori K."/>
            <person name="Tanai H."/>
            <person name="Kimata M."/>
            <person name="Watanabe M."/>
            <person name="Hiraoka S."/>
            <person name="Chiba Y."/>
            <person name="Ishida S."/>
            <person name="Ono Y."/>
            <person name="Takiguchi S."/>
            <person name="Watanabe S."/>
            <person name="Yosida M."/>
            <person name="Hotuta T."/>
            <person name="Kusano J."/>
            <person name="Kanehori K."/>
            <person name="Takahashi-Fujii A."/>
            <person name="Hara H."/>
            <person name="Tanase T.-O."/>
            <person name="Nomura Y."/>
            <person name="Togiya S."/>
            <person name="Komai F."/>
            <person name="Hara R."/>
            <person name="Takeuchi K."/>
            <person name="Arita M."/>
            <person name="Imose N."/>
            <person name="Musashino K."/>
            <person name="Yuuki H."/>
            <person name="Oshima A."/>
            <person name="Sasaki N."/>
            <person name="Aotsuka S."/>
            <person name="Yoshikawa Y."/>
            <person name="Matsunawa H."/>
            <person name="Ichihara T."/>
            <person name="Shiohata N."/>
            <person name="Sano S."/>
            <person name="Moriya S."/>
            <person name="Momiyama H."/>
            <person name="Satoh N."/>
            <person name="Takami S."/>
            <person name="Terashima Y."/>
            <person name="Suzuki O."/>
            <person name="Nakagawa S."/>
            <person name="Senoh A."/>
            <person name="Mizoguchi H."/>
            <person name="Goto Y."/>
            <person name="Shimizu F."/>
            <person name="Wakebe H."/>
            <person name="Hishigaki H."/>
            <person name="Watanabe T."/>
            <person name="Sugiyama A."/>
            <person name="Takemoto M."/>
            <person name="Kawakami B."/>
            <person name="Yamazaki M."/>
            <person name="Watanabe K."/>
            <person name="Kumagai A."/>
            <person name="Itakura S."/>
            <person name="Fukuzumi Y."/>
            <person name="Fujimori Y."/>
            <person name="Komiyama M."/>
            <person name="Tashiro H."/>
            <person name="Tanigami A."/>
            <person name="Fujiwara T."/>
            <person name="Ono T."/>
            <person name="Yamada K."/>
            <person name="Fujii Y."/>
            <person name="Ozaki K."/>
            <person name="Hirao M."/>
            <person name="Ohmori Y."/>
            <person name="Kawabata A."/>
            <person name="Hikiji T."/>
            <person name="Kobatake N."/>
            <person name="Inagaki H."/>
            <person name="Ikema Y."/>
            <person name="Okamoto S."/>
            <person name="Okitani R."/>
            <person name="Kawakami T."/>
            <person name="Noguchi S."/>
            <person name="Itoh T."/>
            <person name="Shigeta K."/>
            <person name="Senba T."/>
            <person name="Matsumura K."/>
            <person name="Nakajima Y."/>
            <person name="Mizuno T."/>
            <person name="Morinaga M."/>
            <person name="Sasaki M."/>
            <person name="Togashi T."/>
            <person name="Oyama M."/>
            <person name="Hata H."/>
            <person name="Watanabe M."/>
            <person name="Komatsu T."/>
            <person name="Mizushima-Sugano J."/>
            <person name="Satoh T."/>
            <person name="Shirai Y."/>
            <person name="Takahashi Y."/>
            <person name="Nakagawa K."/>
            <person name="Okumura K."/>
            <person name="Nagase T."/>
            <person name="Nomura N."/>
            <person name="Kikuchi H."/>
            <person name="Masuho Y."/>
            <person name="Yamashita R."/>
            <person name="Nakai K."/>
            <person name="Yada T."/>
            <person name="Nakamura Y."/>
            <person name="Ohara O."/>
            <person name="Isogai T."/>
            <person name="Sugano S."/>
        </authorList>
    </citation>
    <scope>NUCLEOTIDE SEQUENCE [LARGE SCALE MRNA] (ISOFORMS A AND 3)</scope>
    <source>
        <tissue>Brain</tissue>
    </source>
</reference>
<reference key="4">
    <citation type="journal article" date="2005" name="Nature">
        <title>Generation and annotation of the DNA sequences of human chromosomes 2 and 4.</title>
        <authorList>
            <person name="Hillier L.W."/>
            <person name="Graves T.A."/>
            <person name="Fulton R.S."/>
            <person name="Fulton L.A."/>
            <person name="Pepin K.H."/>
            <person name="Minx P."/>
            <person name="Wagner-McPherson C."/>
            <person name="Layman D."/>
            <person name="Wylie K."/>
            <person name="Sekhon M."/>
            <person name="Becker M.C."/>
            <person name="Fewell G.A."/>
            <person name="Delehaunty K.D."/>
            <person name="Miner T.L."/>
            <person name="Nash W.E."/>
            <person name="Kremitzki C."/>
            <person name="Oddy L."/>
            <person name="Du H."/>
            <person name="Sun H."/>
            <person name="Bradshaw-Cordum H."/>
            <person name="Ali J."/>
            <person name="Carter J."/>
            <person name="Cordes M."/>
            <person name="Harris A."/>
            <person name="Isak A."/>
            <person name="van Brunt A."/>
            <person name="Nguyen C."/>
            <person name="Du F."/>
            <person name="Courtney L."/>
            <person name="Kalicki J."/>
            <person name="Ozersky P."/>
            <person name="Abbott S."/>
            <person name="Armstrong J."/>
            <person name="Belter E.A."/>
            <person name="Caruso L."/>
            <person name="Cedroni M."/>
            <person name="Cotton M."/>
            <person name="Davidson T."/>
            <person name="Desai A."/>
            <person name="Elliott G."/>
            <person name="Erb T."/>
            <person name="Fronick C."/>
            <person name="Gaige T."/>
            <person name="Haakenson W."/>
            <person name="Haglund K."/>
            <person name="Holmes A."/>
            <person name="Harkins R."/>
            <person name="Kim K."/>
            <person name="Kruchowski S.S."/>
            <person name="Strong C.M."/>
            <person name="Grewal N."/>
            <person name="Goyea E."/>
            <person name="Hou S."/>
            <person name="Levy A."/>
            <person name="Martinka S."/>
            <person name="Mead K."/>
            <person name="McLellan M.D."/>
            <person name="Meyer R."/>
            <person name="Randall-Maher J."/>
            <person name="Tomlinson C."/>
            <person name="Dauphin-Kohlberg S."/>
            <person name="Kozlowicz-Reilly A."/>
            <person name="Shah N."/>
            <person name="Swearengen-Shahid S."/>
            <person name="Snider J."/>
            <person name="Strong J.T."/>
            <person name="Thompson J."/>
            <person name="Yoakum M."/>
            <person name="Leonard S."/>
            <person name="Pearman C."/>
            <person name="Trani L."/>
            <person name="Radionenko M."/>
            <person name="Waligorski J.E."/>
            <person name="Wang C."/>
            <person name="Rock S.M."/>
            <person name="Tin-Wollam A.-M."/>
            <person name="Maupin R."/>
            <person name="Latreille P."/>
            <person name="Wendl M.C."/>
            <person name="Yang S.-P."/>
            <person name="Pohl C."/>
            <person name="Wallis J.W."/>
            <person name="Spieth J."/>
            <person name="Bieri T.A."/>
            <person name="Berkowicz N."/>
            <person name="Nelson J.O."/>
            <person name="Osborne J."/>
            <person name="Ding L."/>
            <person name="Meyer R."/>
            <person name="Sabo A."/>
            <person name="Shotland Y."/>
            <person name="Sinha P."/>
            <person name="Wohldmann P.E."/>
            <person name="Cook L.L."/>
            <person name="Hickenbotham M.T."/>
            <person name="Eldred J."/>
            <person name="Williams D."/>
            <person name="Jones T.A."/>
            <person name="She X."/>
            <person name="Ciccarelli F.D."/>
            <person name="Izaurralde E."/>
            <person name="Taylor J."/>
            <person name="Schmutz J."/>
            <person name="Myers R.M."/>
            <person name="Cox D.R."/>
            <person name="Huang X."/>
            <person name="McPherson J.D."/>
            <person name="Mardis E.R."/>
            <person name="Clifton S.W."/>
            <person name="Warren W.C."/>
            <person name="Chinwalla A.T."/>
            <person name="Eddy S.R."/>
            <person name="Marra M.A."/>
            <person name="Ovcharenko I."/>
            <person name="Furey T.S."/>
            <person name="Miller W."/>
            <person name="Eichler E.E."/>
            <person name="Bork P."/>
            <person name="Suyama M."/>
            <person name="Torrents D."/>
            <person name="Waterston R.H."/>
            <person name="Wilson R.K."/>
        </authorList>
    </citation>
    <scope>NUCLEOTIDE SEQUENCE [LARGE SCALE GENOMIC DNA]</scope>
</reference>
<reference key="5">
    <citation type="submission" date="2005-09" db="EMBL/GenBank/DDBJ databases">
        <authorList>
            <person name="Mural R.J."/>
            <person name="Istrail S."/>
            <person name="Sutton G."/>
            <person name="Florea L."/>
            <person name="Halpern A.L."/>
            <person name="Mobarry C.M."/>
            <person name="Lippert R."/>
            <person name="Walenz B."/>
            <person name="Shatkay H."/>
            <person name="Dew I."/>
            <person name="Miller J.R."/>
            <person name="Flanigan M.J."/>
            <person name="Edwards N.J."/>
            <person name="Bolanos R."/>
            <person name="Fasulo D."/>
            <person name="Halldorsson B.V."/>
            <person name="Hannenhalli S."/>
            <person name="Turner R."/>
            <person name="Yooseph S."/>
            <person name="Lu F."/>
            <person name="Nusskern D.R."/>
            <person name="Shue B.C."/>
            <person name="Zheng X.H."/>
            <person name="Zhong F."/>
            <person name="Delcher A.L."/>
            <person name="Huson D.H."/>
            <person name="Kravitz S.A."/>
            <person name="Mouchard L."/>
            <person name="Reinert K."/>
            <person name="Remington K.A."/>
            <person name="Clark A.G."/>
            <person name="Waterman M.S."/>
            <person name="Eichler E.E."/>
            <person name="Adams M.D."/>
            <person name="Hunkapiller M.W."/>
            <person name="Myers E.W."/>
            <person name="Venter J.C."/>
        </authorList>
    </citation>
    <scope>NUCLEOTIDE SEQUENCE [LARGE SCALE GENOMIC DNA]</scope>
</reference>
<reference key="6">
    <citation type="journal article" date="2004" name="Genome Res.">
        <title>The status, quality, and expansion of the NIH full-length cDNA project: the Mammalian Gene Collection (MGC).</title>
        <authorList>
            <consortium name="The MGC Project Team"/>
        </authorList>
    </citation>
    <scope>NUCLEOTIDE SEQUENCE [LARGE SCALE MRNA] (ISOFORMS A AND B)</scope>
    <source>
        <tissue>Brain</tissue>
        <tissue>Uterus</tissue>
    </source>
</reference>
<reference key="7">
    <citation type="journal article" date="1999" name="FEBS Lett.">
        <title>Arfaptin 1 forms a complex with ADP-ribosylation factor and inhibits phospholipase D.</title>
        <authorList>
            <person name="Williger B.-T."/>
            <person name="Provost J.J."/>
            <person name="Ho W.-T."/>
            <person name="Milstine J."/>
            <person name="Exton J.H."/>
        </authorList>
    </citation>
    <scope>INTERACTION WITH ARF1; ARF3; ARF5 AND ARF6</scope>
</reference>
<reference key="8">
    <citation type="journal article" date="2008" name="Proc. Natl. Acad. Sci. U.S.A.">
        <title>A quantitative atlas of mitotic phosphorylation.</title>
        <authorList>
            <person name="Dephoure N."/>
            <person name="Zhou C."/>
            <person name="Villen J."/>
            <person name="Beausoleil S.A."/>
            <person name="Bakalarski C.E."/>
            <person name="Elledge S.J."/>
            <person name="Gygi S.P."/>
        </authorList>
    </citation>
    <scope>PHOSPHORYLATION [LARGE SCALE ANALYSIS] AT SER-69 AND SER-132</scope>
    <scope>IDENTIFICATION BY MASS SPECTROMETRY [LARGE SCALE ANALYSIS]</scope>
    <source>
        <tissue>Cervix carcinoma</tissue>
    </source>
</reference>
<reference key="9">
    <citation type="journal article" date="2009" name="Sci. Signal.">
        <title>Quantitative phosphoproteomic analysis of T cell receptor signaling reveals system-wide modulation of protein-protein interactions.</title>
        <authorList>
            <person name="Mayya V."/>
            <person name="Lundgren D.H."/>
            <person name="Hwang S.-I."/>
            <person name="Rezaul K."/>
            <person name="Wu L."/>
            <person name="Eng J.K."/>
            <person name="Rodionov V."/>
            <person name="Han D.K."/>
        </authorList>
    </citation>
    <scope>PHOSPHORYLATION [LARGE SCALE ANALYSIS] AT THR-361</scope>
    <scope>IDENTIFICATION BY MASS SPECTROMETRY [LARGE SCALE ANALYSIS]</scope>
    <source>
        <tissue>Leukemic T-cell</tissue>
    </source>
</reference>
<reference key="10">
    <citation type="journal article" date="2010" name="Sci. Signal.">
        <title>Quantitative phosphoproteomics reveals widespread full phosphorylation site occupancy during mitosis.</title>
        <authorList>
            <person name="Olsen J.V."/>
            <person name="Vermeulen M."/>
            <person name="Santamaria A."/>
            <person name="Kumar C."/>
            <person name="Miller M.L."/>
            <person name="Jensen L.J."/>
            <person name="Gnad F."/>
            <person name="Cox J."/>
            <person name="Jensen T.S."/>
            <person name="Nigg E.A."/>
            <person name="Brunak S."/>
            <person name="Mann M."/>
        </authorList>
    </citation>
    <scope>ACETYLATION [LARGE SCALE ANALYSIS] AT ALA-2</scope>
    <scope>PHOSPHORYLATION [LARGE SCALE ANALYSIS] AT SER-5; SER-69 AND SER-79</scope>
    <scope>CLEAVAGE OF INITIATOR METHIONINE [LARGE SCALE ANALYSIS]</scope>
    <scope>IDENTIFICATION BY MASS SPECTROMETRY [LARGE SCALE ANALYSIS]</scope>
    <source>
        <tissue>Cervix carcinoma</tissue>
    </source>
</reference>
<reference key="11">
    <citation type="journal article" date="2011" name="BMC Syst. Biol.">
        <title>Initial characterization of the human central proteome.</title>
        <authorList>
            <person name="Burkard T.R."/>
            <person name="Planyavsky M."/>
            <person name="Kaupe I."/>
            <person name="Breitwieser F.P."/>
            <person name="Buerckstuemmer T."/>
            <person name="Bennett K.L."/>
            <person name="Superti-Furga G."/>
            <person name="Colinge J."/>
        </authorList>
    </citation>
    <scope>IDENTIFICATION BY MASS SPECTROMETRY [LARGE SCALE ANALYSIS]</scope>
</reference>
<reference key="12">
    <citation type="journal article" date="2011" name="Sci. Signal.">
        <title>System-wide temporal characterization of the proteome and phosphoproteome of human embryonic stem cell differentiation.</title>
        <authorList>
            <person name="Rigbolt K.T."/>
            <person name="Prokhorova T.A."/>
            <person name="Akimov V."/>
            <person name="Henningsen J."/>
            <person name="Johansen P.T."/>
            <person name="Kratchmarova I."/>
            <person name="Kassem M."/>
            <person name="Mann M."/>
            <person name="Olsen J.V."/>
            <person name="Blagoev B."/>
        </authorList>
    </citation>
    <scope>ACETYLATION [LARGE SCALE ANALYSIS] AT ALA-2</scope>
    <scope>PHOSPHORYLATION [LARGE SCALE ANALYSIS] AT SER-132</scope>
    <scope>CLEAVAGE OF INITIATOR METHIONINE [LARGE SCALE ANALYSIS]</scope>
    <scope>IDENTIFICATION BY MASS SPECTROMETRY [LARGE SCALE ANALYSIS]</scope>
</reference>
<reference key="13">
    <citation type="journal article" date="2011" name="J. Biol. Chem.">
        <title>Arfaptins are localized to the trans-Golgi by interaction with Arl1, but not Arfs.</title>
        <authorList>
            <person name="Man Z."/>
            <person name="Kondo Y."/>
            <person name="Koga H."/>
            <person name="Umino H."/>
            <person name="Nakayama K."/>
            <person name="Shin H.W."/>
        </authorList>
    </citation>
    <scope>SUBCELLULAR LOCATION</scope>
    <scope>INTERACTION WITH ARL1 AND ARFIP2</scope>
    <scope>SUBUNIT</scope>
</reference>
<reference key="14">
    <citation type="journal article" date="2012" name="Dev. Cell">
        <title>The BAR domain protein Arfaptin-1 controls secretory granule biogenesis at the trans-Golgi network.</title>
        <authorList>
            <person name="Gehart H."/>
            <person name="Goginashvili A."/>
            <person name="Beck R."/>
            <person name="Morvan J."/>
            <person name="Erbs E."/>
            <person name="Formentini I."/>
            <person name="De Matteis M.A."/>
            <person name="Schwab Y."/>
            <person name="Wieland F.T."/>
            <person name="Ricci R."/>
        </authorList>
    </citation>
    <scope>FUNCTION</scope>
    <scope>PHOSPHORYLATION AT SER-132</scope>
    <scope>MUTAGENESIS OF SER-132</scope>
    <scope>SUBCELLULAR LOCATION</scope>
    <scope>INTERACTION WITH ARF1 AND ARL1</scope>
</reference>
<reference key="15">
    <citation type="journal article" date="2012" name="Proc. Natl. Acad. Sci. U.S.A.">
        <title>N-terminal acetylome analyses and functional insights of the N-terminal acetyltransferase NatB.</title>
        <authorList>
            <person name="Van Damme P."/>
            <person name="Lasa M."/>
            <person name="Polevoda B."/>
            <person name="Gazquez C."/>
            <person name="Elosegui-Artola A."/>
            <person name="Kim D.S."/>
            <person name="De Juan-Pardo E."/>
            <person name="Demeyer K."/>
            <person name="Hole K."/>
            <person name="Larrea E."/>
            <person name="Timmerman E."/>
            <person name="Prieto J."/>
            <person name="Arnesen T."/>
            <person name="Sherman F."/>
            <person name="Gevaert K."/>
            <person name="Aldabe R."/>
        </authorList>
    </citation>
    <scope>ACETYLATION [LARGE SCALE ANALYSIS] AT ALA-2</scope>
    <scope>CLEAVAGE OF INITIATOR METHIONINE [LARGE SCALE ANALYSIS]</scope>
    <scope>IDENTIFICATION BY MASS SPECTROMETRY [LARGE SCALE ANALYSIS]</scope>
</reference>
<reference key="16">
    <citation type="journal article" date="2013" name="J. Proteome Res.">
        <title>Toward a comprehensive characterization of a human cancer cell phosphoproteome.</title>
        <authorList>
            <person name="Zhou H."/>
            <person name="Di Palma S."/>
            <person name="Preisinger C."/>
            <person name="Peng M."/>
            <person name="Polat A.N."/>
            <person name="Heck A.J."/>
            <person name="Mohammed S."/>
        </authorList>
    </citation>
    <scope>PHOSPHORYLATION [LARGE SCALE ANALYSIS] AT SER-5; SER-28; SER-39 AND SER-132</scope>
    <scope>IDENTIFICATION BY MASS SPECTROMETRY [LARGE SCALE ANALYSIS]</scope>
    <source>
        <tissue>Cervix carcinoma</tissue>
        <tissue>Erythroleukemia</tissue>
    </source>
</reference>
<reference key="17">
    <citation type="journal article" date="2014" name="J. Proteomics">
        <title>An enzyme assisted RP-RPLC approach for in-depth analysis of human liver phosphoproteome.</title>
        <authorList>
            <person name="Bian Y."/>
            <person name="Song C."/>
            <person name="Cheng K."/>
            <person name="Dong M."/>
            <person name="Wang F."/>
            <person name="Huang J."/>
            <person name="Sun D."/>
            <person name="Wang L."/>
            <person name="Ye M."/>
            <person name="Zou H."/>
        </authorList>
    </citation>
    <scope>PHOSPHORYLATION [LARGE SCALE ANALYSIS] AT SER-36 AND SER-39</scope>
    <scope>IDENTIFICATION BY MASS SPECTROMETRY [LARGE SCALE ANALYSIS]</scope>
    <source>
        <tissue>Liver</tissue>
    </source>
</reference>
<reference key="18">
    <citation type="journal article" date="2019" name="J. Cell Biol.">
        <title>ATG9A shapes the forming autophagosome through Arfaptin 2 and phosphatidylinositol 4-kinase IIIbeta.</title>
        <authorList>
            <person name="Judith D."/>
            <person name="Jefferies H.B.J."/>
            <person name="Boeing S."/>
            <person name="Frith D."/>
            <person name="Snijders A.P."/>
            <person name="Tooze S.A."/>
        </authorList>
    </citation>
    <scope>INTERACTION WITH ATG9A</scope>
</reference>
<feature type="initiator methionine" description="Removed" evidence="15 16 17">
    <location>
        <position position="1"/>
    </location>
</feature>
<feature type="chain" id="PRO_0000064665" description="Arfaptin-1">
    <location>
        <begin position="2"/>
        <end position="373"/>
    </location>
</feature>
<feature type="domain" description="AH" evidence="1">
    <location>
        <begin position="153"/>
        <end position="353"/>
    </location>
</feature>
<feature type="region of interest" description="Disordered" evidence="2">
    <location>
        <begin position="1"/>
        <end position="47"/>
    </location>
</feature>
<feature type="compositionally biased region" description="Basic and acidic residues" evidence="2">
    <location>
        <begin position="22"/>
        <end position="35"/>
    </location>
</feature>
<feature type="modified residue" description="N-acetylalanine" evidence="15 16 17">
    <location>
        <position position="2"/>
    </location>
</feature>
<feature type="modified residue" description="Phosphoserine" evidence="15 18">
    <location>
        <position position="5"/>
    </location>
</feature>
<feature type="modified residue" description="Phosphoserine" evidence="18">
    <location>
        <position position="28"/>
    </location>
</feature>
<feature type="modified residue" description="Phosphoserine" evidence="19">
    <location>
        <position position="36"/>
    </location>
</feature>
<feature type="modified residue" description="Phosphoserine" evidence="18 19">
    <location>
        <position position="39"/>
    </location>
</feature>
<feature type="modified residue" description="Phosphoserine" evidence="13 15">
    <location>
        <position position="69"/>
    </location>
</feature>
<feature type="modified residue" description="Phosphoserine" evidence="15">
    <location>
        <position position="79"/>
    </location>
</feature>
<feature type="modified residue" description="Phosphoserine" evidence="5 13 16 18">
    <location>
        <position position="132"/>
    </location>
</feature>
<feature type="modified residue" description="Phosphothreonine" evidence="14">
    <location>
        <position position="361"/>
    </location>
</feature>
<feature type="splice variant" id="VSP_057425" description="In isoform 3." evidence="8">
    <location>
        <begin position="32"/>
        <end position="211"/>
    </location>
</feature>
<feature type="splice variant" id="VSP_004088" description="In isoform A." evidence="8 9 11">
    <location>
        <begin position="69"/>
        <end position="100"/>
    </location>
</feature>
<feature type="mutagenesis site" description="Complete loss of phosphorylation by PRKD1." evidence="5">
    <original>S</original>
    <variation>A</variation>
    <location>
        <position position="132"/>
    </location>
</feature>
<sequence length="373" mass="41738">MAQESPKNSAAEIPVTSNGEVDDSREHSFNRDLKHSLPSGLGLSETQITSHGFDNTKEGVIEAGAFQGSPAPPLPSVMSPSRVAASRLAQQGSDLIVPAGGQRTQTKSGPVILADEIKNPAMEKLELVRKWSLNTYKCTRQIISEKLGRGSRTVDLELEAQIDILRDNKKKYENILKLAQTLSTQLFQMVHTQRQLGDAFADLSLKSLELHEEFGYNADTQKLLAKNGETLLGAINFFIASVNTLVNKTIEDTLMTVKQYESARIEYDAYRTDLEELNLGPRDANTLPKIEQSQHLFQAHKEKYDKMRNDVSVKLKFLEENKVKVLHNQLVLFHNAIAAYFAGNQKQLEQTLKQFHIKLKTPGVDAPSWLEEQ</sequence>
<proteinExistence type="evidence at protein level"/>
<evidence type="ECO:0000255" key="1">
    <source>
        <dbReference type="PROSITE-ProRule" id="PRU00294"/>
    </source>
</evidence>
<evidence type="ECO:0000256" key="2">
    <source>
        <dbReference type="SAM" id="MobiDB-lite"/>
    </source>
</evidence>
<evidence type="ECO:0000269" key="3">
    <source>
    </source>
</evidence>
<evidence type="ECO:0000269" key="4">
    <source>
    </source>
</evidence>
<evidence type="ECO:0000269" key="5">
    <source>
    </source>
</evidence>
<evidence type="ECO:0000269" key="6">
    <source>
    </source>
</evidence>
<evidence type="ECO:0000269" key="7">
    <source>
    </source>
</evidence>
<evidence type="ECO:0000303" key="8">
    <source>
    </source>
</evidence>
<evidence type="ECO:0000303" key="9">
    <source>
    </source>
</evidence>
<evidence type="ECO:0000303" key="10">
    <source>
    </source>
</evidence>
<evidence type="ECO:0000303" key="11">
    <source>
    </source>
</evidence>
<evidence type="ECO:0000312" key="12">
    <source>
        <dbReference type="HGNC" id="HGNC:21496"/>
    </source>
</evidence>
<evidence type="ECO:0007744" key="13">
    <source>
    </source>
</evidence>
<evidence type="ECO:0007744" key="14">
    <source>
    </source>
</evidence>
<evidence type="ECO:0007744" key="15">
    <source>
    </source>
</evidence>
<evidence type="ECO:0007744" key="16">
    <source>
    </source>
</evidence>
<evidence type="ECO:0007744" key="17">
    <source>
    </source>
</evidence>
<evidence type="ECO:0007744" key="18">
    <source>
    </source>
</evidence>
<evidence type="ECO:0007744" key="19">
    <source>
    </source>
</evidence>